<accession>P63268</accession>
<accession>P12718</accession>
<protein>
    <recommendedName>
        <fullName>Actin, gamma-enteric smooth muscle</fullName>
        <ecNumber evidence="4">3.6.4.-</ecNumber>
    </recommendedName>
    <alternativeName>
        <fullName>Alpha-actin-3</fullName>
    </alternativeName>
    <alternativeName>
        <fullName>Gamma-2-actin</fullName>
    </alternativeName>
    <alternativeName>
        <fullName>Smooth muscle gamma-actin</fullName>
    </alternativeName>
    <component>
        <recommendedName>
            <fullName>Actin, gamma-enteric smooth muscle, intermediate form</fullName>
        </recommendedName>
    </component>
</protein>
<keyword id="KW-0007">Acetylation</keyword>
<keyword id="KW-0067">ATP-binding</keyword>
<keyword id="KW-0963">Cytoplasm</keyword>
<keyword id="KW-0206">Cytoskeleton</keyword>
<keyword id="KW-0378">Hydrolase</keyword>
<keyword id="KW-0488">Methylation</keyword>
<keyword id="KW-0514">Muscle protein</keyword>
<keyword id="KW-0547">Nucleotide-binding</keyword>
<keyword id="KW-0558">Oxidation</keyword>
<keyword id="KW-1185">Reference proteome</keyword>
<proteinExistence type="evidence at protein level"/>
<name>ACTH_MOUSE</name>
<feature type="initiator methionine" description="Removed">
    <location>
        <position position="1"/>
    </location>
</feature>
<feature type="chain" id="PRO_0000442951" description="Actin, gamma-enteric smooth muscle, intermediate form" evidence="1">
    <location>
        <begin position="2"/>
        <end position="376"/>
    </location>
</feature>
<feature type="chain" id="PRO_0000442952" description="Actin, gamma-enteric smooth muscle" evidence="2">
    <location>
        <begin position="3"/>
        <end position="376"/>
    </location>
</feature>
<feature type="modified residue" description="N-acetylcysteine; in intermediate form" evidence="1">
    <location>
        <position position="2"/>
    </location>
</feature>
<feature type="modified residue" description="Methionine (R)-sulfoxide" evidence="5">
    <location>
        <position position="45"/>
    </location>
</feature>
<feature type="modified residue" description="Methionine (R)-sulfoxide" evidence="5">
    <location>
        <position position="48"/>
    </location>
</feature>
<feature type="modified residue" description="Tele-methylhistidine" evidence="2">
    <location>
        <position position="74"/>
    </location>
</feature>
<evidence type="ECO:0000250" key="1">
    <source>
        <dbReference type="UniProtKB" id="P62737"/>
    </source>
</evidence>
<evidence type="ECO:0000250" key="2">
    <source>
        <dbReference type="UniProtKB" id="P63267"/>
    </source>
</evidence>
<evidence type="ECO:0000250" key="3">
    <source>
        <dbReference type="UniProtKB" id="P68134"/>
    </source>
</evidence>
<evidence type="ECO:0000250" key="4">
    <source>
        <dbReference type="UniProtKB" id="P68137"/>
    </source>
</evidence>
<evidence type="ECO:0000269" key="5">
    <source>
    </source>
</evidence>
<evidence type="ECO:0000269" key="6">
    <source>
    </source>
</evidence>
<evidence type="ECO:0000305" key="7"/>
<sequence>MCEEETTALVCDNGSGLCKAGFAGDDAPRAVFPSIVGRPRHQGVMVGMGQKDSYVGDEAQSKRGILTLKYPIEHGIITNWDDMEKIWHHSFYNELRVAPEEHPTLLTEAPLNPKANREKMTQIMFETFNVPAMYVAIQAVLSLYASGRTTGIVLDSGDGVTHNVPIYEGYALPHAIMRLDLAGRDLTDYLMKILTERGYSFVTTAEREIVRDIKEKLCYVALDFENEMATAASSSSLEKSYELPDGQVITIGNERFRCPETLFQPSFIGMESAGIHETTYNSIMKCDIDIRKDLYANNVLSGGTTMYPGIADRMQKEITALAPSTMKIKIIAPPERKYSVWIGGSILASLSTFQQMWISKPEYDEAGPSIVHRKCF</sequence>
<dbReference type="EC" id="3.6.4.-" evidence="4"/>
<dbReference type="EMBL" id="M26689">
    <property type="protein sequence ID" value="AAA56841.1"/>
    <property type="molecule type" value="mRNA"/>
</dbReference>
<dbReference type="EMBL" id="BC002042">
    <property type="protein sequence ID" value="AAH02042.1"/>
    <property type="molecule type" value="mRNA"/>
</dbReference>
<dbReference type="CCDS" id="CCDS51822.1"/>
<dbReference type="PIR" id="A32788">
    <property type="entry name" value="A32788"/>
</dbReference>
<dbReference type="RefSeq" id="NP_033740.2">
    <property type="nucleotide sequence ID" value="NM_009610.2"/>
</dbReference>
<dbReference type="SMR" id="P63268"/>
<dbReference type="BioGRID" id="197947">
    <property type="interactions" value="3"/>
</dbReference>
<dbReference type="FunCoup" id="P63268">
    <property type="interactions" value="150"/>
</dbReference>
<dbReference type="IntAct" id="P63268">
    <property type="interactions" value="1"/>
</dbReference>
<dbReference type="STRING" id="10090.ENSMUSP00000074658"/>
<dbReference type="GlyGen" id="P63268">
    <property type="glycosylation" value="1 site, 1 O-linked glycan (1 site)"/>
</dbReference>
<dbReference type="iPTMnet" id="P63268"/>
<dbReference type="PhosphoSitePlus" id="P63268"/>
<dbReference type="SwissPalm" id="P63268"/>
<dbReference type="jPOST" id="P63268"/>
<dbReference type="PaxDb" id="10090-ENSMUSP00000074658"/>
<dbReference type="PeptideAtlas" id="P63268"/>
<dbReference type="ProteomicsDB" id="285855"/>
<dbReference type="Pumba" id="P63268"/>
<dbReference type="Antibodypedia" id="3526">
    <property type="antibodies" value="322 antibodies from 32 providers"/>
</dbReference>
<dbReference type="DNASU" id="11468"/>
<dbReference type="Ensembl" id="ENSMUST00000075161.12">
    <property type="protein sequence ID" value="ENSMUSP00000074658.6"/>
    <property type="gene ID" value="ENSMUSG00000059430.15"/>
</dbReference>
<dbReference type="Ensembl" id="ENSMUST00000121731.8">
    <property type="protein sequence ID" value="ENSMUSP00000113552.2"/>
    <property type="gene ID" value="ENSMUSG00000059430.15"/>
</dbReference>
<dbReference type="GeneID" id="11468"/>
<dbReference type="KEGG" id="mmu:11468"/>
<dbReference type="UCSC" id="uc009cnr.1">
    <property type="organism name" value="mouse"/>
</dbReference>
<dbReference type="AGR" id="MGI:104589"/>
<dbReference type="CTD" id="72"/>
<dbReference type="MGI" id="MGI:104589">
    <property type="gene designation" value="Actg2"/>
</dbReference>
<dbReference type="VEuPathDB" id="HostDB:ENSMUSG00000059430"/>
<dbReference type="eggNOG" id="KOG0676">
    <property type="taxonomic scope" value="Eukaryota"/>
</dbReference>
<dbReference type="GeneTree" id="ENSGT00940000154148"/>
<dbReference type="InParanoid" id="P63268"/>
<dbReference type="OMA" id="PXEREIV"/>
<dbReference type="OrthoDB" id="9545632at2759"/>
<dbReference type="PhylomeDB" id="P63268"/>
<dbReference type="TreeFam" id="TF354237"/>
<dbReference type="Reactome" id="R-MMU-445355">
    <property type="pathway name" value="Smooth Muscle Contraction"/>
</dbReference>
<dbReference type="Reactome" id="R-MMU-9913351">
    <property type="pathway name" value="Formation of the dystrophin-glycoprotein complex (DGC)"/>
</dbReference>
<dbReference type="BioGRID-ORCS" id="11468">
    <property type="hits" value="6 hits in 78 CRISPR screens"/>
</dbReference>
<dbReference type="CD-CODE" id="8BEB9125">
    <property type="entry name" value="Cajal body"/>
</dbReference>
<dbReference type="ChiTaRS" id="Actg2">
    <property type="organism name" value="mouse"/>
</dbReference>
<dbReference type="PRO" id="PR:P63268"/>
<dbReference type="Proteomes" id="UP000000589">
    <property type="component" value="Chromosome 6"/>
</dbReference>
<dbReference type="RNAct" id="P63268">
    <property type="molecule type" value="protein"/>
</dbReference>
<dbReference type="Bgee" id="ENSMUSG00000059430">
    <property type="expression patterns" value="Expressed in umbilical cord and 161 other cell types or tissues"/>
</dbReference>
<dbReference type="ExpressionAtlas" id="P63268">
    <property type="expression patterns" value="baseline and differential"/>
</dbReference>
<dbReference type="GO" id="GO:0044297">
    <property type="term" value="C:cell body"/>
    <property type="evidence" value="ECO:0000250"/>
    <property type="project" value="AgBase"/>
</dbReference>
<dbReference type="GO" id="GO:0071944">
    <property type="term" value="C:cell periphery"/>
    <property type="evidence" value="ECO:0000314"/>
    <property type="project" value="MGI"/>
</dbReference>
<dbReference type="GO" id="GO:0005737">
    <property type="term" value="C:cytoplasm"/>
    <property type="evidence" value="ECO:0000250"/>
    <property type="project" value="AgBase"/>
</dbReference>
<dbReference type="GO" id="GO:0005856">
    <property type="term" value="C:cytoskeleton"/>
    <property type="evidence" value="ECO:0007669"/>
    <property type="project" value="UniProtKB-SubCell"/>
</dbReference>
<dbReference type="GO" id="GO:0030175">
    <property type="term" value="C:filopodium"/>
    <property type="evidence" value="ECO:0000250"/>
    <property type="project" value="AgBase"/>
</dbReference>
<dbReference type="GO" id="GO:0030027">
    <property type="term" value="C:lamellipodium"/>
    <property type="evidence" value="ECO:0000250"/>
    <property type="project" value="AgBase"/>
</dbReference>
<dbReference type="GO" id="GO:0032982">
    <property type="term" value="C:myosin filament"/>
    <property type="evidence" value="ECO:0000250"/>
    <property type="project" value="AgBase"/>
</dbReference>
<dbReference type="GO" id="GO:0005524">
    <property type="term" value="F:ATP binding"/>
    <property type="evidence" value="ECO:0007669"/>
    <property type="project" value="UniProtKB-KW"/>
</dbReference>
<dbReference type="GO" id="GO:0016787">
    <property type="term" value="F:hydrolase activity"/>
    <property type="evidence" value="ECO:0007669"/>
    <property type="project" value="UniProtKB-KW"/>
</dbReference>
<dbReference type="GO" id="GO:0090131">
    <property type="term" value="P:mesenchyme migration"/>
    <property type="evidence" value="ECO:0000250"/>
    <property type="project" value="AgBase"/>
</dbReference>
<dbReference type="GO" id="GO:0010628">
    <property type="term" value="P:positive regulation of gene expression"/>
    <property type="evidence" value="ECO:0000250"/>
    <property type="project" value="AgBase"/>
</dbReference>
<dbReference type="CDD" id="cd10224">
    <property type="entry name" value="ASKHA_NBD_actin"/>
    <property type="match status" value="1"/>
</dbReference>
<dbReference type="FunFam" id="2.30.36.70:FF:000001">
    <property type="entry name" value="Actin, alpha skeletal muscle"/>
    <property type="match status" value="1"/>
</dbReference>
<dbReference type="FunFam" id="3.30.420.40:FF:000131">
    <property type="entry name" value="Actin, alpha skeletal muscle"/>
    <property type="match status" value="1"/>
</dbReference>
<dbReference type="FunFam" id="3.30.420.40:FF:000291">
    <property type="entry name" value="Actin, alpha skeletal muscle"/>
    <property type="match status" value="1"/>
</dbReference>
<dbReference type="FunFam" id="3.90.640.10:FF:000047">
    <property type="entry name" value="Actin, alpha skeletal muscle"/>
    <property type="match status" value="1"/>
</dbReference>
<dbReference type="FunFam" id="3.30.420.40:FF:000058">
    <property type="entry name" value="Putative actin-related protein 5"/>
    <property type="match status" value="1"/>
</dbReference>
<dbReference type="Gene3D" id="3.30.420.40">
    <property type="match status" value="2"/>
</dbReference>
<dbReference type="Gene3D" id="3.90.640.10">
    <property type="entry name" value="Actin, Chain A, domain 4"/>
    <property type="match status" value="1"/>
</dbReference>
<dbReference type="InterPro" id="IPR004000">
    <property type="entry name" value="Actin"/>
</dbReference>
<dbReference type="InterPro" id="IPR020902">
    <property type="entry name" value="Actin/actin-like_CS"/>
</dbReference>
<dbReference type="InterPro" id="IPR004001">
    <property type="entry name" value="Actin_CS"/>
</dbReference>
<dbReference type="InterPro" id="IPR043129">
    <property type="entry name" value="ATPase_NBD"/>
</dbReference>
<dbReference type="PANTHER" id="PTHR11937">
    <property type="entry name" value="ACTIN"/>
    <property type="match status" value="1"/>
</dbReference>
<dbReference type="Pfam" id="PF00022">
    <property type="entry name" value="Actin"/>
    <property type="match status" value="1"/>
</dbReference>
<dbReference type="PRINTS" id="PR00190">
    <property type="entry name" value="ACTIN"/>
</dbReference>
<dbReference type="SMART" id="SM00268">
    <property type="entry name" value="ACTIN"/>
    <property type="match status" value="1"/>
</dbReference>
<dbReference type="SUPFAM" id="SSF53067">
    <property type="entry name" value="Actin-like ATPase domain"/>
    <property type="match status" value="2"/>
</dbReference>
<dbReference type="PROSITE" id="PS00406">
    <property type="entry name" value="ACTINS_1"/>
    <property type="match status" value="1"/>
</dbReference>
<dbReference type="PROSITE" id="PS00432">
    <property type="entry name" value="ACTINS_2"/>
    <property type="match status" value="1"/>
</dbReference>
<dbReference type="PROSITE" id="PS01132">
    <property type="entry name" value="ACTINS_ACT_LIKE"/>
    <property type="match status" value="1"/>
</dbReference>
<organism>
    <name type="scientific">Mus musculus</name>
    <name type="common">Mouse</name>
    <dbReference type="NCBI Taxonomy" id="10090"/>
    <lineage>
        <taxon>Eukaryota</taxon>
        <taxon>Metazoa</taxon>
        <taxon>Chordata</taxon>
        <taxon>Craniata</taxon>
        <taxon>Vertebrata</taxon>
        <taxon>Euteleostomi</taxon>
        <taxon>Mammalia</taxon>
        <taxon>Eutheria</taxon>
        <taxon>Euarchontoglires</taxon>
        <taxon>Glires</taxon>
        <taxon>Rodentia</taxon>
        <taxon>Myomorpha</taxon>
        <taxon>Muroidea</taxon>
        <taxon>Muridae</taxon>
        <taxon>Murinae</taxon>
        <taxon>Mus</taxon>
        <taxon>Mus</taxon>
    </lineage>
</organism>
<gene>
    <name type="primary">Actg2</name>
    <name type="synonym">Acta3</name>
    <name type="synonym">Actsg</name>
</gene>
<reference key="1">
    <citation type="journal article" date="1989" name="Mol. Cell. Biol.">
        <title>Identification and developmental expression of a smooth-muscle gamma-actin in postmeiotic male germ cells of mice.</title>
        <authorList>
            <person name="Kim E."/>
            <person name="Waters S.H."/>
            <person name="Hake L.E."/>
            <person name="Hecht N.B."/>
        </authorList>
    </citation>
    <scope>NUCLEOTIDE SEQUENCE [MRNA]</scope>
</reference>
<reference key="2">
    <citation type="journal article" date="2004" name="Genome Res.">
        <title>The status, quality, and expansion of the NIH full-length cDNA project: the Mammalian Gene Collection (MGC).</title>
        <authorList>
            <consortium name="The MGC Project Team"/>
        </authorList>
    </citation>
    <scope>NUCLEOTIDE SEQUENCE [LARGE SCALE MRNA]</scope>
    <source>
        <strain>Czech II</strain>
        <tissue>Mammary tumor</tissue>
    </source>
</reference>
<reference key="3">
    <citation type="journal article" date="2013" name="Mol. Cell">
        <title>MsrB1 and MICALs regulate actin assembly and macrophage function via reversible stereoselective methionine oxidation.</title>
        <authorList>
            <person name="Lee B.C."/>
            <person name="Peterfi Z."/>
            <person name="Hoffmann F.W."/>
            <person name="Moore R.E."/>
            <person name="Kaya A."/>
            <person name="Avanesov A."/>
            <person name="Tarrago L."/>
            <person name="Zhou Y."/>
            <person name="Weerapana E."/>
            <person name="Fomenko D.E."/>
            <person name="Hoffmann P.R."/>
            <person name="Gladyshev V.N."/>
        </authorList>
    </citation>
    <scope>OXIDATION AT MET-45 AND MET-48</scope>
    <scope>DEOXIDATION AT MET-45 AND MET-48</scope>
</reference>
<reference key="4">
    <citation type="journal article" date="2014" name="Hum. Genet.">
        <title>De novo ACTG2 mutations cause congenital distended bladder, microcolon, and intestinal hypoperistalsis.</title>
        <authorList>
            <person name="Thorson W."/>
            <person name="Diaz-Horta O."/>
            <person name="Foster J. II"/>
            <person name="Spiliopoulos M."/>
            <person name="Quintero R."/>
            <person name="Farooq A."/>
            <person name="Blanton S."/>
            <person name="Tekin M."/>
        </authorList>
    </citation>
    <scope>TISSUE SPECIFICITY</scope>
</reference>
<comment type="function">
    <text>Actins are highly conserved proteins that are involved in various types of cell motility and are ubiquitously expressed in all eukaryotic cells.</text>
</comment>
<comment type="catalytic activity">
    <reaction evidence="4">
        <text>ATP + H2O = ADP + phosphate + H(+)</text>
        <dbReference type="Rhea" id="RHEA:13065"/>
        <dbReference type="ChEBI" id="CHEBI:15377"/>
        <dbReference type="ChEBI" id="CHEBI:15378"/>
        <dbReference type="ChEBI" id="CHEBI:30616"/>
        <dbReference type="ChEBI" id="CHEBI:43474"/>
        <dbReference type="ChEBI" id="CHEBI:456216"/>
    </reaction>
</comment>
<comment type="subunit">
    <text>Polymerization of globular actin (G-actin) leads to a structural filament (F-actin) in the form of a two-stranded helix. Each actin can bind to 4 others.</text>
</comment>
<comment type="subcellular location">
    <subcellularLocation>
        <location>Cytoplasm</location>
        <location>Cytoskeleton</location>
    </subcellularLocation>
</comment>
<comment type="tissue specificity">
    <text evidence="6">Expressed in tissues containing smooth muscle particularly the intestines and bladder.</text>
</comment>
<comment type="PTM">
    <text evidence="5">Oxidation of Met-45 and Met-48 by MICALs (MICAL1, MICAL2 or MICAL3) to form methionine sulfoxide promotes actin filament depolymerization. MICAL1 and MICAL2 produce the (R)-S-oxide form. The (R)-S-oxide form is reverted by MSRB1 and MSRB2, which promotes actin repolymerization.</text>
</comment>
<comment type="PTM">
    <text evidence="3">Monomethylation at Lys-85 (K85me1) regulates actin-myosin interaction and actomyosin-dependent processes. Demethylation by ALKBH4 is required for maintaining actomyosin dynamics supporting normal cleavage furrow ingression during cytokinesis and cell migration.</text>
</comment>
<comment type="PTM">
    <text evidence="2">Methylated at His-74 by SETD3.</text>
</comment>
<comment type="PTM">
    <molecule>Actin, gamma-enteric smooth muscle, intermediate form</molecule>
    <text evidence="1">N-terminal cleavage of acetylated cysteine of intermediate muscle actin by ACTMAP.</text>
</comment>
<comment type="miscellaneous">
    <text>In vertebrates 3 main groups of actin isoforms, alpha, beta and gamma have been identified. The alpha actins are found in muscle tissues and are a major constituent of the contractile apparatus. The beta and gamma actins coexist in most cell types as components of the cytoskeleton and as mediators of internal cell motility.</text>
</comment>
<comment type="similarity">
    <text evidence="7">Belongs to the actin family.</text>
</comment>